<gene>
    <name type="primary">icln</name>
    <name type="ORF">CG4924</name>
</gene>
<organism>
    <name type="scientific">Drosophila melanogaster</name>
    <name type="common">Fruit fly</name>
    <dbReference type="NCBI Taxonomy" id="7227"/>
    <lineage>
        <taxon>Eukaryota</taxon>
        <taxon>Metazoa</taxon>
        <taxon>Ecdysozoa</taxon>
        <taxon>Arthropoda</taxon>
        <taxon>Hexapoda</taxon>
        <taxon>Insecta</taxon>
        <taxon>Pterygota</taxon>
        <taxon>Neoptera</taxon>
        <taxon>Endopterygota</taxon>
        <taxon>Diptera</taxon>
        <taxon>Brachycera</taxon>
        <taxon>Muscomorpha</taxon>
        <taxon>Ephydroidea</taxon>
        <taxon>Drosophilidae</taxon>
        <taxon>Drosophila</taxon>
        <taxon>Sophophora</taxon>
    </lineage>
</organism>
<sequence>MVLIMRVSPPEHGLLYTANNIKLKLGDKVVGEGTVYIAQNTLSWQPTELAEGISIEWKQVSLHGISSNPRKCIYFMLDHKVEWNGVYGDPPQQAVNGRNGGGSEAEVDEGNGSDEHDEDDNFEDAVDEQFGEVTECWLMPEDIHTVDTMYSAMTTCQALHPDSANSDSEDSDPMQDAGGLEDEAMEEDDALTLGRNGVQNLSLDDDEERFEDADE</sequence>
<proteinExistence type="evidence at protein level"/>
<evidence type="ECO:0000250" key="1"/>
<evidence type="ECO:0000250" key="2">
    <source>
        <dbReference type="UniProtKB" id="P54105"/>
    </source>
</evidence>
<evidence type="ECO:0000256" key="3">
    <source>
        <dbReference type="SAM" id="MobiDB-lite"/>
    </source>
</evidence>
<evidence type="ECO:0000269" key="4">
    <source>
    </source>
</evidence>
<evidence type="ECO:0000305" key="5"/>
<evidence type="ECO:0007829" key="6">
    <source>
        <dbReference type="PDB" id="4F7U"/>
    </source>
</evidence>
<comment type="function">
    <text evidence="2 4">Involved in both the assembly of spliceosomal snRNPs and the methylation of Sm proteins. Chaperone that regulates the assembly of spliceosomal U1, U2, U4 and U5 small nuclear ribonucleoproteins (snRNPs), the building blocks of the spliceosome, and thereby plays an important role in the splicing of cellular pre-mRNAs. Most spliceosomal snRNPs contain a common set of Sm proteins SNRPB, SNRPD1, SNRPD2, SNRPD3, SNRPE, SNRPF and SNRPG that assemble in a heptameric protein ring on the Sm site of the small nuclear RNA to form the core snRNP (Sm core). In the cytosol, the Sm proteins SNRPD1, SNRPD2, SNRPE, SNRPF and SNRPG are trapped in an inactive 6S pICln-Sm complex by the chaperone CLNS1A that controls the assembly of the core snRNP. Dissociation by the SMN complex of CLNS1A from the trapped Sm proteins and their transfer to an SMN-Sm complex triggers the assembly of core snRNPs and their transport to the nucleus (By similarity).</text>
</comment>
<comment type="subunit">
    <text evidence="4">Component of the methylosome, a 20S complex containing at least CLNS1A/pICln, PRMT5/SKB1 and WDR77/MEP50; may mediate SNRPD1 and SNRPD3 methylation. Forms a 6S pICln-Sm complex composed of CLNS1A/pICln, SNRPD1, SNRPD2, SNRPE, SNRPF and SNRPG; ring-like structure where CLNS1A/pICln mimics additional Sm proteins and which is unable to assemble into the core snRNP.</text>
</comment>
<comment type="subcellular location">
    <subcellularLocation>
        <location evidence="1">Cytoplasm</location>
        <location evidence="1">Cytosol</location>
    </subcellularLocation>
    <subcellularLocation>
        <location evidence="1">Nucleus</location>
    </subcellularLocation>
    <subcellularLocation>
        <location evidence="1">Cytoplasm</location>
        <location evidence="1">Cytoskeleton</location>
    </subcellularLocation>
</comment>
<comment type="similarity">
    <text evidence="5">Belongs to the pICln (TC 1.A.47) family.</text>
</comment>
<dbReference type="EMBL" id="AF216522">
    <property type="protein sequence ID" value="AAF21126.1"/>
    <property type="molecule type" value="mRNA"/>
</dbReference>
<dbReference type="EMBL" id="AE013599">
    <property type="protein sequence ID" value="AAF57826.1"/>
    <property type="molecule type" value="Genomic_DNA"/>
</dbReference>
<dbReference type="EMBL" id="AY084214">
    <property type="protein sequence ID" value="AAL89952.1"/>
    <property type="molecule type" value="mRNA"/>
</dbReference>
<dbReference type="RefSeq" id="NP_611237.2">
    <property type="nucleotide sequence ID" value="NM_137393.4"/>
</dbReference>
<dbReference type="PDB" id="4F7U">
    <property type="method" value="X-ray"/>
    <property type="resolution" value="1.90 A"/>
    <property type="chains" value="P/Q=1-160"/>
</dbReference>
<dbReference type="PDB" id="4V98">
    <property type="method" value="X-ray"/>
    <property type="resolution" value="3.10 A"/>
    <property type="chains" value="A3/AG/AO/AW/Ae/Am/Au/B3/BG/BO/BW/Be/Bm/Bu/CG/CO/CW/Ce/Cm/Cu=1-180"/>
</dbReference>
<dbReference type="PDBsum" id="4F7U"/>
<dbReference type="PDBsum" id="4V98"/>
<dbReference type="SMR" id="A1ZAW5"/>
<dbReference type="BioGRID" id="62685">
    <property type="interactions" value="16"/>
</dbReference>
<dbReference type="FunCoup" id="A1ZAW5">
    <property type="interactions" value="1223"/>
</dbReference>
<dbReference type="IntAct" id="A1ZAW5">
    <property type="interactions" value="26"/>
</dbReference>
<dbReference type="STRING" id="7227.FBpp0086010"/>
<dbReference type="PaxDb" id="7227-FBpp0086010"/>
<dbReference type="DNASU" id="36997"/>
<dbReference type="EnsemblMetazoa" id="FBtr0086832">
    <property type="protein sequence ID" value="FBpp0086010"/>
    <property type="gene ID" value="FBgn0029079"/>
</dbReference>
<dbReference type="GeneID" id="36997"/>
<dbReference type="KEGG" id="dme:Dmel_CG4924"/>
<dbReference type="UCSC" id="CG4924-RA">
    <property type="organism name" value="d. melanogaster"/>
</dbReference>
<dbReference type="AGR" id="FB:FBgn0029079"/>
<dbReference type="CTD" id="36997"/>
<dbReference type="FlyBase" id="FBgn0029079">
    <property type="gene designation" value="icln"/>
</dbReference>
<dbReference type="VEuPathDB" id="VectorBase:FBgn0029079"/>
<dbReference type="eggNOG" id="KOG3238">
    <property type="taxonomic scope" value="Eukaryota"/>
</dbReference>
<dbReference type="HOGENOM" id="CLU_077804_4_0_1"/>
<dbReference type="InParanoid" id="A1ZAW5"/>
<dbReference type="OMA" id="YFMLDHK"/>
<dbReference type="OrthoDB" id="19714at2759"/>
<dbReference type="PhylomeDB" id="A1ZAW5"/>
<dbReference type="SignaLink" id="A1ZAW5"/>
<dbReference type="BioGRID-ORCS" id="36997">
    <property type="hits" value="0 hits in 1 CRISPR screen"/>
</dbReference>
<dbReference type="EvolutionaryTrace" id="A1ZAW5"/>
<dbReference type="GenomeRNAi" id="36997"/>
<dbReference type="PRO" id="PR:A1ZAW5"/>
<dbReference type="Proteomes" id="UP000000803">
    <property type="component" value="Chromosome 2R"/>
</dbReference>
<dbReference type="Bgee" id="FBgn0029079">
    <property type="expression patterns" value="Expressed in eye disc (Drosophila) and 70 other cell types or tissues"/>
</dbReference>
<dbReference type="ExpressionAtlas" id="A1ZAW5">
    <property type="expression patterns" value="baseline and differential"/>
</dbReference>
<dbReference type="GO" id="GO:0005856">
    <property type="term" value="C:cytoskeleton"/>
    <property type="evidence" value="ECO:0007669"/>
    <property type="project" value="UniProtKB-SubCell"/>
</dbReference>
<dbReference type="GO" id="GO:0005829">
    <property type="term" value="C:cytosol"/>
    <property type="evidence" value="ECO:0000318"/>
    <property type="project" value="GO_Central"/>
</dbReference>
<dbReference type="GO" id="GO:0034709">
    <property type="term" value="C:methylosome"/>
    <property type="evidence" value="ECO:0007669"/>
    <property type="project" value="InterPro"/>
</dbReference>
<dbReference type="GO" id="GO:0034715">
    <property type="term" value="C:pICln-Sm protein complex"/>
    <property type="evidence" value="ECO:0000318"/>
    <property type="project" value="GO_Central"/>
</dbReference>
<dbReference type="GO" id="GO:0005886">
    <property type="term" value="C:plasma membrane"/>
    <property type="evidence" value="ECO:0007669"/>
    <property type="project" value="InterPro"/>
</dbReference>
<dbReference type="GO" id="GO:0005681">
    <property type="term" value="C:spliceosomal complex"/>
    <property type="evidence" value="ECO:0000318"/>
    <property type="project" value="GO_Central"/>
</dbReference>
<dbReference type="GO" id="GO:0006884">
    <property type="term" value="P:cell volume homeostasis"/>
    <property type="evidence" value="ECO:0007669"/>
    <property type="project" value="InterPro"/>
</dbReference>
<dbReference type="GO" id="GO:0006821">
    <property type="term" value="P:chloride transport"/>
    <property type="evidence" value="ECO:0007669"/>
    <property type="project" value="InterPro"/>
</dbReference>
<dbReference type="GO" id="GO:0045292">
    <property type="term" value="P:mRNA cis splicing, via spliceosome"/>
    <property type="evidence" value="ECO:0000318"/>
    <property type="project" value="GO_Central"/>
</dbReference>
<dbReference type="GO" id="GO:0000387">
    <property type="term" value="P:spliceosomal snRNP assembly"/>
    <property type="evidence" value="ECO:0000318"/>
    <property type="project" value="GO_Central"/>
</dbReference>
<dbReference type="Gene3D" id="2.30.29.30">
    <property type="entry name" value="Pleckstrin-homology domain (PH domain)/Phosphotyrosine-binding domain (PTB)"/>
    <property type="match status" value="1"/>
</dbReference>
<dbReference type="InterPro" id="IPR003521">
    <property type="entry name" value="ICln"/>
</dbReference>
<dbReference type="InterPro" id="IPR039924">
    <property type="entry name" value="ICln/Lot5/Saf5"/>
</dbReference>
<dbReference type="InterPro" id="IPR011993">
    <property type="entry name" value="PH-like_dom_sf"/>
</dbReference>
<dbReference type="PANTHER" id="PTHR21399">
    <property type="entry name" value="CHLORIDE CONDUCTANCE REGULATORY PROTEIN ICLN"/>
    <property type="match status" value="1"/>
</dbReference>
<dbReference type="PANTHER" id="PTHR21399:SF0">
    <property type="entry name" value="METHYLOSOME SUBUNIT PICLN"/>
    <property type="match status" value="1"/>
</dbReference>
<dbReference type="Pfam" id="PF03517">
    <property type="entry name" value="Voldacs"/>
    <property type="match status" value="1"/>
</dbReference>
<dbReference type="PRINTS" id="PR01348">
    <property type="entry name" value="ICLNCHANNEL"/>
</dbReference>
<protein>
    <recommendedName>
        <fullName>Methylosome subunit pICln</fullName>
    </recommendedName>
</protein>
<accession>A1ZAW5</accession>
<accession>Q9U3W1</accession>
<keyword id="KW-0002">3D-structure</keyword>
<keyword id="KW-0143">Chaperone</keyword>
<keyword id="KW-0963">Cytoplasm</keyword>
<keyword id="KW-0206">Cytoskeleton</keyword>
<keyword id="KW-0507">mRNA processing</keyword>
<keyword id="KW-0508">mRNA splicing</keyword>
<keyword id="KW-0539">Nucleus</keyword>
<keyword id="KW-1185">Reference proteome</keyword>
<feature type="chain" id="PRO_0000425412" description="Methylosome subunit pICln">
    <location>
        <begin position="1"/>
        <end position="215"/>
    </location>
</feature>
<feature type="region of interest" description="Disordered" evidence="3">
    <location>
        <begin position="88"/>
        <end position="120"/>
    </location>
</feature>
<feature type="region of interest" description="Disordered" evidence="3">
    <location>
        <begin position="160"/>
        <end position="215"/>
    </location>
</feature>
<feature type="compositionally biased region" description="Acidic residues" evidence="3">
    <location>
        <begin position="105"/>
        <end position="120"/>
    </location>
</feature>
<feature type="compositionally biased region" description="Acidic residues" evidence="3">
    <location>
        <begin position="167"/>
        <end position="190"/>
    </location>
</feature>
<feature type="compositionally biased region" description="Acidic residues" evidence="3">
    <location>
        <begin position="203"/>
        <end position="215"/>
    </location>
</feature>
<feature type="sequence conflict" description="In Ref. 1; AAF21126 and 4; AAL89952." evidence="5" ref="1 4">
    <original>R</original>
    <variation>H</variation>
    <location>
        <position position="6"/>
    </location>
</feature>
<feature type="strand" evidence="6">
    <location>
        <begin position="2"/>
        <end position="5"/>
    </location>
</feature>
<feature type="strand" evidence="6">
    <location>
        <begin position="14"/>
        <end position="27"/>
    </location>
</feature>
<feature type="strand" evidence="6">
    <location>
        <begin position="29"/>
        <end position="50"/>
    </location>
</feature>
<feature type="strand" evidence="6">
    <location>
        <begin position="52"/>
        <end position="56"/>
    </location>
</feature>
<feature type="helix" evidence="6">
    <location>
        <begin position="57"/>
        <end position="59"/>
    </location>
</feature>
<feature type="strand" evidence="6">
    <location>
        <begin position="60"/>
        <end position="79"/>
    </location>
</feature>
<feature type="turn" evidence="6">
    <location>
        <begin position="84"/>
        <end position="86"/>
    </location>
</feature>
<feature type="strand" evidence="6">
    <location>
        <begin position="133"/>
        <end position="141"/>
    </location>
</feature>
<feature type="helix" evidence="6">
    <location>
        <begin position="145"/>
        <end position="159"/>
    </location>
</feature>
<reference key="1">
    <citation type="submission" date="1999-12" db="EMBL/GenBank/DDBJ databases">
        <title>Molecular cloning of ICLn.</title>
        <authorList>
            <person name="Laurencon A."/>
            <person name="Hawley S."/>
        </authorList>
    </citation>
    <scope>NUCLEOTIDE SEQUENCE [MRNA]</scope>
</reference>
<reference key="2">
    <citation type="journal article" date="2000" name="Science">
        <title>The genome sequence of Drosophila melanogaster.</title>
        <authorList>
            <person name="Adams M.D."/>
            <person name="Celniker S.E."/>
            <person name="Holt R.A."/>
            <person name="Evans C.A."/>
            <person name="Gocayne J.D."/>
            <person name="Amanatides P.G."/>
            <person name="Scherer S.E."/>
            <person name="Li P.W."/>
            <person name="Hoskins R.A."/>
            <person name="Galle R.F."/>
            <person name="George R.A."/>
            <person name="Lewis S.E."/>
            <person name="Richards S."/>
            <person name="Ashburner M."/>
            <person name="Henderson S.N."/>
            <person name="Sutton G.G."/>
            <person name="Wortman J.R."/>
            <person name="Yandell M.D."/>
            <person name="Zhang Q."/>
            <person name="Chen L.X."/>
            <person name="Brandon R.C."/>
            <person name="Rogers Y.-H.C."/>
            <person name="Blazej R.G."/>
            <person name="Champe M."/>
            <person name="Pfeiffer B.D."/>
            <person name="Wan K.H."/>
            <person name="Doyle C."/>
            <person name="Baxter E.G."/>
            <person name="Helt G."/>
            <person name="Nelson C.R."/>
            <person name="Miklos G.L.G."/>
            <person name="Abril J.F."/>
            <person name="Agbayani A."/>
            <person name="An H.-J."/>
            <person name="Andrews-Pfannkoch C."/>
            <person name="Baldwin D."/>
            <person name="Ballew R.M."/>
            <person name="Basu A."/>
            <person name="Baxendale J."/>
            <person name="Bayraktaroglu L."/>
            <person name="Beasley E.M."/>
            <person name="Beeson K.Y."/>
            <person name="Benos P.V."/>
            <person name="Berman B.P."/>
            <person name="Bhandari D."/>
            <person name="Bolshakov S."/>
            <person name="Borkova D."/>
            <person name="Botchan M.R."/>
            <person name="Bouck J."/>
            <person name="Brokstein P."/>
            <person name="Brottier P."/>
            <person name="Burtis K.C."/>
            <person name="Busam D.A."/>
            <person name="Butler H."/>
            <person name="Cadieu E."/>
            <person name="Center A."/>
            <person name="Chandra I."/>
            <person name="Cherry J.M."/>
            <person name="Cawley S."/>
            <person name="Dahlke C."/>
            <person name="Davenport L.B."/>
            <person name="Davies P."/>
            <person name="de Pablos B."/>
            <person name="Delcher A."/>
            <person name="Deng Z."/>
            <person name="Mays A.D."/>
            <person name="Dew I."/>
            <person name="Dietz S.M."/>
            <person name="Dodson K."/>
            <person name="Doup L.E."/>
            <person name="Downes M."/>
            <person name="Dugan-Rocha S."/>
            <person name="Dunkov B.C."/>
            <person name="Dunn P."/>
            <person name="Durbin K.J."/>
            <person name="Evangelista C.C."/>
            <person name="Ferraz C."/>
            <person name="Ferriera S."/>
            <person name="Fleischmann W."/>
            <person name="Fosler C."/>
            <person name="Gabrielian A.E."/>
            <person name="Garg N.S."/>
            <person name="Gelbart W.M."/>
            <person name="Glasser K."/>
            <person name="Glodek A."/>
            <person name="Gong F."/>
            <person name="Gorrell J.H."/>
            <person name="Gu Z."/>
            <person name="Guan P."/>
            <person name="Harris M."/>
            <person name="Harris N.L."/>
            <person name="Harvey D.A."/>
            <person name="Heiman T.J."/>
            <person name="Hernandez J.R."/>
            <person name="Houck J."/>
            <person name="Hostin D."/>
            <person name="Houston K.A."/>
            <person name="Howland T.J."/>
            <person name="Wei M.-H."/>
            <person name="Ibegwam C."/>
            <person name="Jalali M."/>
            <person name="Kalush F."/>
            <person name="Karpen G.H."/>
            <person name="Ke Z."/>
            <person name="Kennison J.A."/>
            <person name="Ketchum K.A."/>
            <person name="Kimmel B.E."/>
            <person name="Kodira C.D."/>
            <person name="Kraft C.L."/>
            <person name="Kravitz S."/>
            <person name="Kulp D."/>
            <person name="Lai Z."/>
            <person name="Lasko P."/>
            <person name="Lei Y."/>
            <person name="Levitsky A.A."/>
            <person name="Li J.H."/>
            <person name="Li Z."/>
            <person name="Liang Y."/>
            <person name="Lin X."/>
            <person name="Liu X."/>
            <person name="Mattei B."/>
            <person name="McIntosh T.C."/>
            <person name="McLeod M.P."/>
            <person name="McPherson D."/>
            <person name="Merkulov G."/>
            <person name="Milshina N.V."/>
            <person name="Mobarry C."/>
            <person name="Morris J."/>
            <person name="Moshrefi A."/>
            <person name="Mount S.M."/>
            <person name="Moy M."/>
            <person name="Murphy B."/>
            <person name="Murphy L."/>
            <person name="Muzny D.M."/>
            <person name="Nelson D.L."/>
            <person name="Nelson D.R."/>
            <person name="Nelson K.A."/>
            <person name="Nixon K."/>
            <person name="Nusskern D.R."/>
            <person name="Pacleb J.M."/>
            <person name="Palazzolo M."/>
            <person name="Pittman G.S."/>
            <person name="Pan S."/>
            <person name="Pollard J."/>
            <person name="Puri V."/>
            <person name="Reese M.G."/>
            <person name="Reinert K."/>
            <person name="Remington K."/>
            <person name="Saunders R.D.C."/>
            <person name="Scheeler F."/>
            <person name="Shen H."/>
            <person name="Shue B.C."/>
            <person name="Siden-Kiamos I."/>
            <person name="Simpson M."/>
            <person name="Skupski M.P."/>
            <person name="Smith T.J."/>
            <person name="Spier E."/>
            <person name="Spradling A.C."/>
            <person name="Stapleton M."/>
            <person name="Strong R."/>
            <person name="Sun E."/>
            <person name="Svirskas R."/>
            <person name="Tector C."/>
            <person name="Turner R."/>
            <person name="Venter E."/>
            <person name="Wang A.H."/>
            <person name="Wang X."/>
            <person name="Wang Z.-Y."/>
            <person name="Wassarman D.A."/>
            <person name="Weinstock G.M."/>
            <person name="Weissenbach J."/>
            <person name="Williams S.M."/>
            <person name="Woodage T."/>
            <person name="Worley K.C."/>
            <person name="Wu D."/>
            <person name="Yang S."/>
            <person name="Yao Q.A."/>
            <person name="Ye J."/>
            <person name="Yeh R.-F."/>
            <person name="Zaveri J.S."/>
            <person name="Zhan M."/>
            <person name="Zhang G."/>
            <person name="Zhao Q."/>
            <person name="Zheng L."/>
            <person name="Zheng X.H."/>
            <person name="Zhong F.N."/>
            <person name="Zhong W."/>
            <person name="Zhou X."/>
            <person name="Zhu S.C."/>
            <person name="Zhu X."/>
            <person name="Smith H.O."/>
            <person name="Gibbs R.A."/>
            <person name="Myers E.W."/>
            <person name="Rubin G.M."/>
            <person name="Venter J.C."/>
        </authorList>
    </citation>
    <scope>NUCLEOTIDE SEQUENCE [LARGE SCALE GENOMIC DNA]</scope>
    <source>
        <strain>Berkeley</strain>
    </source>
</reference>
<reference key="3">
    <citation type="journal article" date="2002" name="Genome Biol.">
        <title>Annotation of the Drosophila melanogaster euchromatic genome: a systematic review.</title>
        <authorList>
            <person name="Misra S."/>
            <person name="Crosby M.A."/>
            <person name="Mungall C.J."/>
            <person name="Matthews B.B."/>
            <person name="Campbell K.S."/>
            <person name="Hradecky P."/>
            <person name="Huang Y."/>
            <person name="Kaminker J.S."/>
            <person name="Millburn G.H."/>
            <person name="Prochnik S.E."/>
            <person name="Smith C.D."/>
            <person name="Tupy J.L."/>
            <person name="Whitfield E.J."/>
            <person name="Bayraktaroglu L."/>
            <person name="Berman B.P."/>
            <person name="Bettencourt B.R."/>
            <person name="Celniker S.E."/>
            <person name="de Grey A.D.N.J."/>
            <person name="Drysdale R.A."/>
            <person name="Harris N.L."/>
            <person name="Richter J."/>
            <person name="Russo S."/>
            <person name="Schroeder A.J."/>
            <person name="Shu S.Q."/>
            <person name="Stapleton M."/>
            <person name="Yamada C."/>
            <person name="Ashburner M."/>
            <person name="Gelbart W.M."/>
            <person name="Rubin G.M."/>
            <person name="Lewis S.E."/>
        </authorList>
    </citation>
    <scope>GENOME REANNOTATION</scope>
    <source>
        <strain>Berkeley</strain>
    </source>
</reference>
<reference key="4">
    <citation type="journal article" date="2002" name="Genome Biol.">
        <title>A Drosophila full-length cDNA resource.</title>
        <authorList>
            <person name="Stapleton M."/>
            <person name="Carlson J.W."/>
            <person name="Brokstein P."/>
            <person name="Yu C."/>
            <person name="Champe M."/>
            <person name="George R.A."/>
            <person name="Guarin H."/>
            <person name="Kronmiller B."/>
            <person name="Pacleb J.M."/>
            <person name="Park S."/>
            <person name="Wan K.H."/>
            <person name="Rubin G.M."/>
            <person name="Celniker S.E."/>
        </authorList>
    </citation>
    <scope>NUCLEOTIDE SEQUENCE [LARGE SCALE MRNA]</scope>
    <source>
        <strain>Berkeley</strain>
        <tissue>Embryo</tissue>
    </source>
</reference>
<reference key="5">
    <citation type="journal article" date="2013" name="Mol. Cell">
        <title>Structural basis of assembly chaperone-mediated snRNP formation.</title>
        <authorList>
            <person name="Grimm C."/>
            <person name="Chari A."/>
            <person name="Pelz J.P."/>
            <person name="Kuper J."/>
            <person name="Kisker C."/>
            <person name="Diederichs K."/>
            <person name="Stark H."/>
            <person name="Schindelin H."/>
            <person name="Fischer U."/>
        </authorList>
    </citation>
    <scope>X-RAY CRYSTALLOGRAPHY (1.90 ANGSTROMS) OF 1-180 IN 6S PICLN-SM COMPLEX</scope>
    <scope>IDENTIFICATION IN 6S PICLN-SM COMPLEX</scope>
    <scope>FUNCTION IN SNRNP BIOGENESIS</scope>
</reference>
<name>ICLN_DROME</name>